<gene>
    <name evidence="1" type="primary">rsmA</name>
    <name evidence="1" type="synonym">ksgA</name>
    <name type="ordered locus">SAR0494</name>
</gene>
<name>RSMA_STAAR</name>
<sequence>MLDNKDIATPSRTRALLDKYGFNFKKSLGQNFLIDVNIINNIIDASDIDAQTGVIEIGPGMGSLTEQLARHAKRVLAFEIDQRLIPVLNDTLSPYDNVTVINEDILKANIKEAVENHLQDCEKIMVVANLPYYITTPILLNLMQQDIPIDGYVVMMQKEVGERLNAEIGSKAYGSLSIVVQYYTETSKVLTVPKSVFMPPPNVDSIVVKLMQRTEPLVTVDNEEAFFKLAKAAFAQRRKTINNNYQNYFKDGKQHKEVIIQWLEQAGIDPRRRGETLSIQDFAKLYEEKKKFPQLEN</sequence>
<feature type="chain" id="PRO_0000101606" description="Ribosomal RNA small subunit methyltransferase A">
    <location>
        <begin position="1"/>
        <end position="297"/>
    </location>
</feature>
<feature type="binding site" evidence="1">
    <location>
        <position position="31"/>
    </location>
    <ligand>
        <name>S-adenosyl-L-methionine</name>
        <dbReference type="ChEBI" id="CHEBI:59789"/>
    </ligand>
</feature>
<feature type="binding site" evidence="1">
    <location>
        <position position="33"/>
    </location>
    <ligand>
        <name>S-adenosyl-L-methionine</name>
        <dbReference type="ChEBI" id="CHEBI:59789"/>
    </ligand>
</feature>
<feature type="binding site" evidence="1">
    <location>
        <position position="58"/>
    </location>
    <ligand>
        <name>S-adenosyl-L-methionine</name>
        <dbReference type="ChEBI" id="CHEBI:59789"/>
    </ligand>
</feature>
<feature type="binding site" evidence="1">
    <location>
        <position position="79"/>
    </location>
    <ligand>
        <name>S-adenosyl-L-methionine</name>
        <dbReference type="ChEBI" id="CHEBI:59789"/>
    </ligand>
</feature>
<feature type="binding site" evidence="1">
    <location>
        <position position="104"/>
    </location>
    <ligand>
        <name>S-adenosyl-L-methionine</name>
        <dbReference type="ChEBI" id="CHEBI:59789"/>
    </ligand>
</feature>
<feature type="binding site" evidence="1">
    <location>
        <position position="129"/>
    </location>
    <ligand>
        <name>S-adenosyl-L-methionine</name>
        <dbReference type="ChEBI" id="CHEBI:59789"/>
    </ligand>
</feature>
<reference key="1">
    <citation type="journal article" date="2004" name="Proc. Natl. Acad. Sci. U.S.A.">
        <title>Complete genomes of two clinical Staphylococcus aureus strains: evidence for the rapid evolution of virulence and drug resistance.</title>
        <authorList>
            <person name="Holden M.T.G."/>
            <person name="Feil E.J."/>
            <person name="Lindsay J.A."/>
            <person name="Peacock S.J."/>
            <person name="Day N.P.J."/>
            <person name="Enright M.C."/>
            <person name="Foster T.J."/>
            <person name="Moore C.E."/>
            <person name="Hurst L."/>
            <person name="Atkin R."/>
            <person name="Barron A."/>
            <person name="Bason N."/>
            <person name="Bentley S.D."/>
            <person name="Chillingworth C."/>
            <person name="Chillingworth T."/>
            <person name="Churcher C."/>
            <person name="Clark L."/>
            <person name="Corton C."/>
            <person name="Cronin A."/>
            <person name="Doggett J."/>
            <person name="Dowd L."/>
            <person name="Feltwell T."/>
            <person name="Hance Z."/>
            <person name="Harris B."/>
            <person name="Hauser H."/>
            <person name="Holroyd S."/>
            <person name="Jagels K."/>
            <person name="James K.D."/>
            <person name="Lennard N."/>
            <person name="Line A."/>
            <person name="Mayes R."/>
            <person name="Moule S."/>
            <person name="Mungall K."/>
            <person name="Ormond D."/>
            <person name="Quail M.A."/>
            <person name="Rabbinowitsch E."/>
            <person name="Rutherford K.M."/>
            <person name="Sanders M."/>
            <person name="Sharp S."/>
            <person name="Simmonds M."/>
            <person name="Stevens K."/>
            <person name="Whitehead S."/>
            <person name="Barrell B.G."/>
            <person name="Spratt B.G."/>
            <person name="Parkhill J."/>
        </authorList>
    </citation>
    <scope>NUCLEOTIDE SEQUENCE [LARGE SCALE GENOMIC DNA]</scope>
    <source>
        <strain>MRSA252</strain>
    </source>
</reference>
<evidence type="ECO:0000255" key="1">
    <source>
        <dbReference type="HAMAP-Rule" id="MF_00607"/>
    </source>
</evidence>
<proteinExistence type="inferred from homology"/>
<organism>
    <name type="scientific">Staphylococcus aureus (strain MRSA252)</name>
    <dbReference type="NCBI Taxonomy" id="282458"/>
    <lineage>
        <taxon>Bacteria</taxon>
        <taxon>Bacillati</taxon>
        <taxon>Bacillota</taxon>
        <taxon>Bacilli</taxon>
        <taxon>Bacillales</taxon>
        <taxon>Staphylococcaceae</taxon>
        <taxon>Staphylococcus</taxon>
    </lineage>
</organism>
<comment type="function">
    <text evidence="1">Specifically dimethylates two adjacent adenosines (A1518 and A1519) in the loop of a conserved hairpin near the 3'-end of 16S rRNA in the 30S particle. May play a critical role in biogenesis of 30S subunits.</text>
</comment>
<comment type="catalytic activity">
    <reaction evidence="1">
        <text>adenosine(1518)/adenosine(1519) in 16S rRNA + 4 S-adenosyl-L-methionine = N(6)-dimethyladenosine(1518)/N(6)-dimethyladenosine(1519) in 16S rRNA + 4 S-adenosyl-L-homocysteine + 4 H(+)</text>
        <dbReference type="Rhea" id="RHEA:19609"/>
        <dbReference type="Rhea" id="RHEA-COMP:10232"/>
        <dbReference type="Rhea" id="RHEA-COMP:10233"/>
        <dbReference type="ChEBI" id="CHEBI:15378"/>
        <dbReference type="ChEBI" id="CHEBI:57856"/>
        <dbReference type="ChEBI" id="CHEBI:59789"/>
        <dbReference type="ChEBI" id="CHEBI:74411"/>
        <dbReference type="ChEBI" id="CHEBI:74493"/>
        <dbReference type="EC" id="2.1.1.182"/>
    </reaction>
</comment>
<comment type="subcellular location">
    <subcellularLocation>
        <location evidence="1">Cytoplasm</location>
    </subcellularLocation>
</comment>
<comment type="similarity">
    <text evidence="1">Belongs to the class I-like SAM-binding methyltransferase superfamily. rRNA adenine N(6)-methyltransferase family. RsmA subfamily.</text>
</comment>
<keyword id="KW-0963">Cytoplasm</keyword>
<keyword id="KW-0489">Methyltransferase</keyword>
<keyword id="KW-0694">RNA-binding</keyword>
<keyword id="KW-0698">rRNA processing</keyword>
<keyword id="KW-0949">S-adenosyl-L-methionine</keyword>
<keyword id="KW-0808">Transferase</keyword>
<protein>
    <recommendedName>
        <fullName evidence="1">Ribosomal RNA small subunit methyltransferase A</fullName>
        <ecNumber evidence="1">2.1.1.182</ecNumber>
    </recommendedName>
    <alternativeName>
        <fullName evidence="1">16S rRNA (adenine(1518)-N(6)/adenine(1519)-N(6))-dimethyltransferase</fullName>
    </alternativeName>
    <alternativeName>
        <fullName evidence="1">16S rRNA dimethyladenosine transferase</fullName>
    </alternativeName>
    <alternativeName>
        <fullName evidence="1">16S rRNA dimethylase</fullName>
    </alternativeName>
    <alternativeName>
        <fullName evidence="1">S-adenosylmethionine-6-N', N'-adenosyl(rRNA) dimethyltransferase</fullName>
    </alternativeName>
</protein>
<dbReference type="EC" id="2.1.1.182" evidence="1"/>
<dbReference type="EMBL" id="BX571856">
    <property type="protein sequence ID" value="CAG39516.1"/>
    <property type="molecule type" value="Genomic_DNA"/>
</dbReference>
<dbReference type="RefSeq" id="WP_000886499.1">
    <property type="nucleotide sequence ID" value="NC_002952.2"/>
</dbReference>
<dbReference type="SMR" id="Q6GJH8"/>
<dbReference type="KEGG" id="sar:SAR0494"/>
<dbReference type="HOGENOM" id="CLU_041220_0_0_9"/>
<dbReference type="Proteomes" id="UP000000596">
    <property type="component" value="Chromosome"/>
</dbReference>
<dbReference type="GO" id="GO:0005829">
    <property type="term" value="C:cytosol"/>
    <property type="evidence" value="ECO:0007669"/>
    <property type="project" value="TreeGrafter"/>
</dbReference>
<dbReference type="GO" id="GO:0052908">
    <property type="term" value="F:16S rRNA (adenine(1518)-N(6)/adenine(1519)-N(6))-dimethyltransferase activity"/>
    <property type="evidence" value="ECO:0007669"/>
    <property type="project" value="UniProtKB-EC"/>
</dbReference>
<dbReference type="GO" id="GO:0003723">
    <property type="term" value="F:RNA binding"/>
    <property type="evidence" value="ECO:0007669"/>
    <property type="project" value="UniProtKB-KW"/>
</dbReference>
<dbReference type="CDD" id="cd02440">
    <property type="entry name" value="AdoMet_MTases"/>
    <property type="match status" value="1"/>
</dbReference>
<dbReference type="FunFam" id="1.10.8.100:FF:000002">
    <property type="entry name" value="Ribosomal RNA small subunit methyltransferase A"/>
    <property type="match status" value="1"/>
</dbReference>
<dbReference type="FunFam" id="3.40.50.150:FF:000023">
    <property type="entry name" value="Ribosomal RNA small subunit methyltransferase A"/>
    <property type="match status" value="1"/>
</dbReference>
<dbReference type="Gene3D" id="1.10.8.100">
    <property type="entry name" value="Ribosomal RNA adenine dimethylase-like, domain 2"/>
    <property type="match status" value="1"/>
</dbReference>
<dbReference type="Gene3D" id="3.40.50.150">
    <property type="entry name" value="Vaccinia Virus protein VP39"/>
    <property type="match status" value="1"/>
</dbReference>
<dbReference type="HAMAP" id="MF_00607">
    <property type="entry name" value="16SrRNA_methyltr_A"/>
    <property type="match status" value="1"/>
</dbReference>
<dbReference type="InterPro" id="IPR001737">
    <property type="entry name" value="KsgA/Erm"/>
</dbReference>
<dbReference type="InterPro" id="IPR023165">
    <property type="entry name" value="rRNA_Ade_diMease-like_C"/>
</dbReference>
<dbReference type="InterPro" id="IPR020596">
    <property type="entry name" value="rRNA_Ade_Mease_Trfase_CS"/>
</dbReference>
<dbReference type="InterPro" id="IPR020598">
    <property type="entry name" value="rRNA_Ade_methylase_Trfase_N"/>
</dbReference>
<dbReference type="InterPro" id="IPR011530">
    <property type="entry name" value="rRNA_adenine_dimethylase"/>
</dbReference>
<dbReference type="InterPro" id="IPR029063">
    <property type="entry name" value="SAM-dependent_MTases_sf"/>
</dbReference>
<dbReference type="NCBIfam" id="TIGR00755">
    <property type="entry name" value="ksgA"/>
    <property type="match status" value="1"/>
</dbReference>
<dbReference type="PANTHER" id="PTHR11727">
    <property type="entry name" value="DIMETHYLADENOSINE TRANSFERASE"/>
    <property type="match status" value="1"/>
</dbReference>
<dbReference type="PANTHER" id="PTHR11727:SF7">
    <property type="entry name" value="DIMETHYLADENOSINE TRANSFERASE-RELATED"/>
    <property type="match status" value="1"/>
</dbReference>
<dbReference type="Pfam" id="PF00398">
    <property type="entry name" value="RrnaAD"/>
    <property type="match status" value="1"/>
</dbReference>
<dbReference type="SMART" id="SM00650">
    <property type="entry name" value="rADc"/>
    <property type="match status" value="1"/>
</dbReference>
<dbReference type="SUPFAM" id="SSF53335">
    <property type="entry name" value="S-adenosyl-L-methionine-dependent methyltransferases"/>
    <property type="match status" value="1"/>
</dbReference>
<dbReference type="PROSITE" id="PS01131">
    <property type="entry name" value="RRNA_A_DIMETH"/>
    <property type="match status" value="1"/>
</dbReference>
<dbReference type="PROSITE" id="PS51689">
    <property type="entry name" value="SAM_RNA_A_N6_MT"/>
    <property type="match status" value="1"/>
</dbReference>
<accession>Q6GJH8</accession>